<gene>
    <name evidence="23" type="primary">Atp2b1</name>
</gene>
<comment type="function">
    <text evidence="2 9 10 11 13 14 15 16 17">Catalyzes the hydrolysis of ATP coupled with the transport of calcium from the cytoplasm to the extracellular space thereby maintaining intracellular calcium homeostasis (PubMed:16956963, PubMed:22311909, PubMed:23266958, PubMed:24805951, PubMed:26392310, PubMed:28827723, PubMed:29950683). Plays a role in blood pressure regulation through regulation of intracellular calcium concentration and nitric oxide production leading to regulation of vascular smooth muscle cells vasoconstriction (PubMed:22311909, PubMed:24805951, PubMed:29950683). Positively regulates bone mineralization through absorption of calcium from the intestine (PubMed:23266958, PubMed:26392310). Plays dual roles in osteoclast differentiation and survival by regulating RANKL-induced calcium oscillations in preosteoclasts and mediating calcium extrusion in mature osteoclasts (PubMed:23266958). Regulates insulin sensitivity through calcium/calmodulin signaling pathway by regulating AKT1 activation and NOS3 activation in endothelial cells (By similarity). May play a role in synaptic transmission by modulating calcium and proton dynamics at the synaptic vesicles.</text>
</comment>
<comment type="catalytic activity">
    <reaction evidence="20 21">
        <text>Ca(2+)(in) + ATP + H2O = Ca(2+)(out) + ADP + phosphate + H(+)</text>
        <dbReference type="Rhea" id="RHEA:18105"/>
        <dbReference type="ChEBI" id="CHEBI:15377"/>
        <dbReference type="ChEBI" id="CHEBI:15378"/>
        <dbReference type="ChEBI" id="CHEBI:29108"/>
        <dbReference type="ChEBI" id="CHEBI:30616"/>
        <dbReference type="ChEBI" id="CHEBI:43474"/>
        <dbReference type="ChEBI" id="CHEBI:456216"/>
        <dbReference type="EC" id="7.2.2.10"/>
    </reaction>
    <physiologicalReaction direction="left-to-right" evidence="20 21">
        <dbReference type="Rhea" id="RHEA:18106"/>
    </physiologicalReaction>
</comment>
<comment type="subunit">
    <text evidence="2 12 15">Monomer. Dimer. Oligomer. Calmodulin binding. Interacts with PDZD11. Interacts with SLC35G1 and STIM1. Interacts with YWHAE; interacts with the monomeric and dimeric forms of the YWHAE but prefer the monomer form; this interaction inhibits calcium-transporting ATPase activity (By similarity). Interacts with NPTN; this interaction stabilizes ATP2B1 and increases ATPase activity; this interaction controls T cell calcium homeostasis following T cell activation (PubMed:28827723). Interacts with EPB41; regulates small intestinal calcium absorption through regulation of membrane expression of ATP2B1 (PubMed:23460639).</text>
</comment>
<comment type="subcellular location">
    <subcellularLocation>
        <location evidence="2">Cell membrane</location>
        <topology evidence="4">Multi-pass membrane protein</topology>
    </subcellularLocation>
    <subcellularLocation>
        <location evidence="12">Basolateral cell membrane</location>
    </subcellularLocation>
    <subcellularLocation>
        <location evidence="7">Synapse</location>
    </subcellularLocation>
    <subcellularLocation>
        <location evidence="17">Presynaptic cell membrane</location>
        <topology evidence="4">Multi-pass membrane protein</topology>
    </subcellularLocation>
    <subcellularLocation>
        <location evidence="17">Cytoplasmic vesicle</location>
        <location evidence="17">Secretory vesicle</location>
        <location evidence="17">Synaptic vesicle membrane</location>
        <topology evidence="4">Multi-pass membrane protein</topology>
    </subcellularLocation>
    <text evidence="7 12 15 17">Colocalizes with SV2A in photoreceptor synaptic terminals (PubMed:12209837). Colocalizes with NPTN to the immunological synapse (PubMed:28827723). Colocalizes with EPB41 to the basolateral membrane in enterocyte (PubMed:23460639). Preferentially sorted to recycling synaptic vesicles.</text>
</comment>
<comment type="tissue specificity">
    <text evidence="7 8 11 12">Expressed in the retina, with strongest expression in the outer plexiform layer and lower expression levels in the inner nuclear layer and the inner plexiform layer (PubMed:12209837). Specifically expressed in the following retinal cell types: photoreceptor cells, cone bipolar cells and horizontal cells (PubMed:12209837). Expressed in osteoclasts (at protein level) (PubMed:23266958). Expressed at highest levels in brain, intestine, kidney, and stomach, and at lower levels in liver, lung, aorta, portal vein, urinary bladder, diaphragm, seminal vesicles and testes (PubMed:15178683). Expressed in small intestinal epithelium (PubMed:23460639).</text>
</comment>
<comment type="developmental stage">
    <text evidence="11">Up-regulated in differentiating osteoclasts.</text>
</comment>
<comment type="induction">
    <text evidence="15">Up-regulated following T cell activation.</text>
</comment>
<comment type="disruption phenotype">
    <text evidence="8 10 14 16">Complete embryonic lethality (PubMed:15178683). Mice with conditional knockout of ATP2B1 in enterocytes, are born at a lower frequency and are smaller at birth and into adulthood than wild-type. At two months of age, mice have a decreased bone mineral density (PubMed:26392310). Mice with conditional knockout of ATP2B1 in vascular smooth muscle cells (VSMCs) are born at the expected Mendelian ratio and grow normaly but have a higher blood pressure than wild-type under resting conditions (PubMed:22311909). Heterozygous ATP2B1 mice are hypertensive and exhibit hypocalcemia and a higher bone mineral density (PubMed:29950683).</text>
</comment>
<comment type="similarity">
    <text evidence="5">Belongs to the cation transport ATPase (P-type) (TC 3.A.3) family. Type IIB subfamily.</text>
</comment>
<feature type="initiator methionine" description="Removed" evidence="2">
    <location>
        <position position="1"/>
    </location>
</feature>
<feature type="chain" id="PRO_0000430669" description="Plasma membrane calcium-transporting ATPase 1" evidence="19">
    <location>
        <begin position="2"/>
        <end position="1220"/>
    </location>
</feature>
<feature type="topological domain" description="Cytoplasmic" evidence="19">
    <location>
        <begin position="2"/>
        <end position="105"/>
    </location>
</feature>
<feature type="transmembrane region" description="Helical" evidence="2">
    <location>
        <begin position="106"/>
        <end position="126"/>
    </location>
</feature>
<feature type="topological domain" description="Extracellular" evidence="19">
    <location>
        <begin position="127"/>
        <end position="154"/>
    </location>
</feature>
<feature type="transmembrane region" description="Helical" evidence="2">
    <location>
        <begin position="155"/>
        <end position="175"/>
    </location>
</feature>
<feature type="topological domain" description="Cytoplasmic" evidence="19">
    <location>
        <begin position="176"/>
        <end position="366"/>
    </location>
</feature>
<feature type="transmembrane region" description="Helical" evidence="2">
    <location>
        <begin position="367"/>
        <end position="386"/>
    </location>
</feature>
<feature type="topological domain" description="Extracellular" evidence="19">
    <location>
        <begin position="387"/>
        <end position="418"/>
    </location>
</feature>
<feature type="transmembrane region" description="Helical" evidence="4">
    <location>
        <begin position="419"/>
        <end position="439"/>
    </location>
</feature>
<feature type="topological domain" description="Cytoplasmic" evidence="19">
    <location>
        <begin position="440"/>
        <end position="855"/>
    </location>
</feature>
<feature type="transmembrane region" description="Helical" evidence="4">
    <location>
        <begin position="856"/>
        <end position="876"/>
    </location>
</feature>
<feature type="topological domain" description="Extracellular" evidence="19">
    <location>
        <begin position="877"/>
        <end position="882"/>
    </location>
</feature>
<feature type="transmembrane region" description="Helical" evidence="4">
    <location>
        <begin position="883"/>
        <end position="903"/>
    </location>
</feature>
<feature type="topological domain" description="Cytoplasmic" evidence="19">
    <location>
        <begin position="904"/>
        <end position="927"/>
    </location>
</feature>
<feature type="transmembrane region" description="Helical" evidence="2">
    <location>
        <begin position="928"/>
        <end position="948"/>
    </location>
</feature>
<feature type="topological domain" description="Extracellular" evidence="19">
    <location>
        <begin position="949"/>
        <end position="971"/>
    </location>
</feature>
<feature type="transmembrane region" description="Helical" evidence="2">
    <location>
        <begin position="972"/>
        <end position="991"/>
    </location>
</feature>
<feature type="topological domain" description="Cytoplasmic" evidence="19">
    <location>
        <begin position="992"/>
        <end position="1005"/>
    </location>
</feature>
<feature type="transmembrane region" description="Helical" evidence="2">
    <location>
        <begin position="1006"/>
        <end position="1027"/>
    </location>
</feature>
<feature type="topological domain" description="Extracellular" evidence="19">
    <location>
        <begin position="1028"/>
        <end position="1039"/>
    </location>
</feature>
<feature type="transmembrane region" description="Helical" evidence="2">
    <location>
        <begin position="1040"/>
        <end position="1060"/>
    </location>
</feature>
<feature type="topological domain" description="Cytoplasmic" evidence="19">
    <location>
        <begin position="1061"/>
        <end position="1220"/>
    </location>
</feature>
<feature type="region of interest" description="Disordered" evidence="6">
    <location>
        <begin position="297"/>
        <end position="356"/>
    </location>
</feature>
<feature type="region of interest" description="Calmodulin-binding subdomain A" evidence="2">
    <location>
        <begin position="1100"/>
        <end position="1117"/>
    </location>
</feature>
<feature type="region of interest" description="Required for basolateral membrane targeting" evidence="1">
    <location>
        <begin position="1118"/>
        <end position="1220"/>
    </location>
</feature>
<feature type="region of interest" description="Disordered" evidence="6">
    <location>
        <begin position="1160"/>
        <end position="1220"/>
    </location>
</feature>
<feature type="compositionally biased region" description="Basic and acidic residues" evidence="6">
    <location>
        <begin position="312"/>
        <end position="325"/>
    </location>
</feature>
<feature type="compositionally biased region" description="Basic and acidic residues" evidence="6">
    <location>
        <begin position="337"/>
        <end position="356"/>
    </location>
</feature>
<feature type="compositionally biased region" description="Polar residues" evidence="6">
    <location>
        <begin position="1200"/>
        <end position="1220"/>
    </location>
</feature>
<feature type="active site" description="4-aspartylphosphate intermediate" evidence="3">
    <location>
        <position position="475"/>
    </location>
</feature>
<feature type="binding site" evidence="3">
    <location>
        <position position="475"/>
    </location>
    <ligand>
        <name>Mg(2+)</name>
        <dbReference type="ChEBI" id="CHEBI:18420"/>
    </ligand>
</feature>
<feature type="binding site" evidence="3">
    <location>
        <position position="477"/>
    </location>
    <ligand>
        <name>Mg(2+)</name>
        <dbReference type="ChEBI" id="CHEBI:18420"/>
    </ligand>
</feature>
<feature type="binding site" evidence="3">
    <location>
        <position position="797"/>
    </location>
    <ligand>
        <name>Mg(2+)</name>
        <dbReference type="ChEBI" id="CHEBI:18420"/>
    </ligand>
</feature>
<feature type="modified residue" description="N-acetylglycine" evidence="2">
    <location>
        <position position="2"/>
    </location>
</feature>
<feature type="modified residue" description="Phosphoserine" evidence="2">
    <location>
        <position position="8"/>
    </location>
</feature>
<feature type="modified residue" description="Phosphoserine" evidence="27 28">
    <location>
        <position position="17"/>
    </location>
</feature>
<feature type="modified residue" description="Phosphoserine" evidence="27 28">
    <location>
        <position position="338"/>
    </location>
</feature>
<feature type="modified residue" description="Phosphothreonine; by PKC" evidence="2">
    <location>
        <position position="1116"/>
    </location>
</feature>
<feature type="modified residue" description="Phosphoserine" evidence="1">
    <location>
        <position position="1140"/>
    </location>
</feature>
<feature type="modified residue" description="Phosphoserine" evidence="24 25 26 27 28">
    <location>
        <position position="1155"/>
    </location>
</feature>
<feature type="modified residue" description="Phosphothreonine" evidence="24 27 28">
    <location>
        <position position="1165"/>
    </location>
</feature>
<feature type="modified residue" description="Phosphoserine" evidence="27">
    <location>
        <position position="1178"/>
    </location>
</feature>
<feature type="modified residue" description="Phosphoserine" evidence="27 28">
    <location>
        <position position="1182"/>
    </location>
</feature>
<keyword id="KW-0007">Acetylation</keyword>
<keyword id="KW-0067">ATP-binding</keyword>
<keyword id="KW-0106">Calcium</keyword>
<keyword id="KW-0109">Calcium transport</keyword>
<keyword id="KW-0112">Calmodulin-binding</keyword>
<keyword id="KW-1003">Cell membrane</keyword>
<keyword id="KW-0966">Cell projection</keyword>
<keyword id="KW-0968">Cytoplasmic vesicle</keyword>
<keyword id="KW-0406">Ion transport</keyword>
<keyword id="KW-0460">Magnesium</keyword>
<keyword id="KW-0472">Membrane</keyword>
<keyword id="KW-0479">Metal-binding</keyword>
<keyword id="KW-0547">Nucleotide-binding</keyword>
<keyword id="KW-0597">Phosphoprotein</keyword>
<keyword id="KW-1185">Reference proteome</keyword>
<keyword id="KW-0770">Synapse</keyword>
<keyword id="KW-1278">Translocase</keyword>
<keyword id="KW-0812">Transmembrane</keyword>
<keyword id="KW-1133">Transmembrane helix</keyword>
<keyword id="KW-0813">Transport</keyword>
<sequence length="1220" mass="134747">MGDMANNSVAYSGVKNSLKEANHDGDFGITLTELRALMELRSTDALRKIQESYGDVYGICTKLKTSPNEGLSGNPADLERREAVFGKNFIPPKKPKTFLQLVWEALQDVTLIILEIAAIVSLGLSFYQPPEGDNALCGEVSVGEEEGEGETGWIEGAAILLSVVCVVLVTAFNDWSKEKQFRGLQSRIEQEQKFTVIRGGQVIQIPVADITVGDIAQVKYGDLLPADGILIQGNDLKIDESSLTGESDHVKKSLDKDPLLLSGTHVMEGSGRMVVTAVGVNSQTGIIFTLLGAGGEEEEKKDEKKKEKKNKKQDGAIENRNKAKAQDGAAMEMQPLKSEEGGDGDEKDKKKANLPKKEKSVLQGKLTKLAVQIGKAGLLMSAITVIILVLYFVIDTFWVQKRPWLAECTPIYIQYFVKFFIIGVTVLVVAVPEGLPLAVTISLAYSVKKMMKDNNLVRHLDACETMGNATAICSDKTGTLTMNRMTVVQAYINEKHYKKVPEPEAIPPNILSYLVTGISVNCAYTSKILPPEKEGGLPRHVGNKTECALLGFLLDLKRDYQDVRNEIPEEALYKVYTFNSVRKSMSTVLKNSDGSFRIFSKGASEIILKKCFKILSANGEAKVFRPRDRDDIVKTVIEPMASEGLRTICLAFRDFPAGEPEPEWDNENDVVTGLTCIAVVGIEDPVRPEVPEAIKKCQRAGITVRMVTGDNINTARAIATKCGILHPGEDFLCLEGKDFNRRIRNEKGEIEQERIDKIWPKLRVLARSSPTDKHTLVKGIIDSTVSEQRQVVAVTGDGTNDGPALKKADVGFAMGIAGTDVAKEASDIILTDDNFTSIVKAVMWGRNVYDSISKFLQFQLTVNVVAVIVAFTGACITQDSPLKAVQMLWVNLIMDTLASLALATEPPTESLLLRKPYGRNKPLISRTMMKNILGHAFYQLVVVFTLLFAGEKFFDIDSGRNAPLHAPPSEHYTIVFNTFVLMQLFNEINARKIHGERNVFEGIFNNAIFCTIVLGTFVVQIIIVQFGGKPFSCSELSIEQWLWSIFLGMGTLLWGQLISTIPTSRLKFLKEAGHGTQKEEIPEEELAEDVEEIDHAERELRRGQILWFRGLNRIQTQIRVVNAFRSSLYEGLEKPESRSSIHNFMTHPEFRIEDSEPHIPLIDDTDAEDDAPTKRNSSPPPSPNKNNNAVDSGIHLTIEMNKSATSSSPGSPLHSLETSL</sequence>
<evidence type="ECO:0000250" key="1">
    <source>
        <dbReference type="UniProtKB" id="P11505"/>
    </source>
</evidence>
<evidence type="ECO:0000250" key="2">
    <source>
        <dbReference type="UniProtKB" id="P20020"/>
    </source>
</evidence>
<evidence type="ECO:0000250" key="3">
    <source>
        <dbReference type="UniProtKB" id="Q5ZWR1"/>
    </source>
</evidence>
<evidence type="ECO:0000255" key="4"/>
<evidence type="ECO:0000255" key="5">
    <source>
        <dbReference type="RuleBase" id="RU361146"/>
    </source>
</evidence>
<evidence type="ECO:0000256" key="6">
    <source>
        <dbReference type="SAM" id="MobiDB-lite"/>
    </source>
</evidence>
<evidence type="ECO:0000269" key="7">
    <source>
    </source>
</evidence>
<evidence type="ECO:0000269" key="8">
    <source>
    </source>
</evidence>
<evidence type="ECO:0000269" key="9">
    <source>
    </source>
</evidence>
<evidence type="ECO:0000269" key="10">
    <source>
    </source>
</evidence>
<evidence type="ECO:0000269" key="11">
    <source>
    </source>
</evidence>
<evidence type="ECO:0000269" key="12">
    <source>
    </source>
</evidence>
<evidence type="ECO:0000269" key="13">
    <source>
    </source>
</evidence>
<evidence type="ECO:0000269" key="14">
    <source>
    </source>
</evidence>
<evidence type="ECO:0000269" key="15">
    <source>
    </source>
</evidence>
<evidence type="ECO:0000269" key="16">
    <source>
    </source>
</evidence>
<evidence type="ECO:0000269" key="17">
    <source>
    </source>
</evidence>
<evidence type="ECO:0000303" key="18">
    <source>
    </source>
</evidence>
<evidence type="ECO:0000305" key="19"/>
<evidence type="ECO:0000305" key="20">
    <source>
    </source>
</evidence>
<evidence type="ECO:0000305" key="21">
    <source>
    </source>
</evidence>
<evidence type="ECO:0000312" key="22">
    <source>
        <dbReference type="EMBL" id="EDL21639.1"/>
    </source>
</evidence>
<evidence type="ECO:0000312" key="23">
    <source>
        <dbReference type="MGI" id="MGI:104653"/>
    </source>
</evidence>
<evidence type="ECO:0007744" key="24">
    <source>
    </source>
</evidence>
<evidence type="ECO:0007744" key="25">
    <source>
    </source>
</evidence>
<evidence type="ECO:0007744" key="26">
    <source>
    </source>
</evidence>
<evidence type="ECO:0007744" key="27">
    <source>
    </source>
</evidence>
<evidence type="ECO:0007744" key="28">
    <source>
    </source>
</evidence>
<dbReference type="EC" id="7.2.2.10" evidence="20"/>
<dbReference type="EMBL" id="AC153906">
    <property type="status" value="NOT_ANNOTATED_CDS"/>
    <property type="molecule type" value="Genomic_DNA"/>
</dbReference>
<dbReference type="EMBL" id="AC160410">
    <property type="status" value="NOT_ANNOTATED_CDS"/>
    <property type="molecule type" value="Genomic_DNA"/>
</dbReference>
<dbReference type="EMBL" id="CH466539">
    <property type="protein sequence ID" value="EDL21639.1"/>
    <property type="molecule type" value="Genomic_DNA"/>
</dbReference>
<dbReference type="CCDS" id="CCDS24145.1"/>
<dbReference type="RefSeq" id="NP_080758.1">
    <property type="nucleotide sequence ID" value="NM_026482.2"/>
</dbReference>
<dbReference type="RefSeq" id="XP_011241851.1">
    <property type="nucleotide sequence ID" value="XM_011243549.4"/>
</dbReference>
<dbReference type="SMR" id="G5E829"/>
<dbReference type="BioGRID" id="212573">
    <property type="interactions" value="26"/>
</dbReference>
<dbReference type="CORUM" id="G5E829"/>
<dbReference type="FunCoup" id="G5E829">
    <property type="interactions" value="2498"/>
</dbReference>
<dbReference type="IntAct" id="G5E829">
    <property type="interactions" value="4"/>
</dbReference>
<dbReference type="MINT" id="G5E829"/>
<dbReference type="STRING" id="10090.ENSMUSP00000020107"/>
<dbReference type="GlyGen" id="G5E829">
    <property type="glycosylation" value="4 sites, 3 N-linked glycans (3 sites), 1 O-linked glycan (1 site)"/>
</dbReference>
<dbReference type="iPTMnet" id="G5E829"/>
<dbReference type="MetOSite" id="G5E829"/>
<dbReference type="PhosphoSitePlus" id="G5E829"/>
<dbReference type="SwissPalm" id="G5E829"/>
<dbReference type="jPOST" id="G5E829"/>
<dbReference type="PaxDb" id="10090-ENSMUSP00000020107"/>
<dbReference type="PeptideAtlas" id="G5E829"/>
<dbReference type="ProteomicsDB" id="277121"/>
<dbReference type="Pumba" id="G5E829"/>
<dbReference type="Antibodypedia" id="2168">
    <property type="antibodies" value="129 antibodies from 28 providers"/>
</dbReference>
<dbReference type="DNASU" id="67972"/>
<dbReference type="Ensembl" id="ENSMUST00000020107.8">
    <property type="protein sequence ID" value="ENSMUSP00000020107.8"/>
    <property type="gene ID" value="ENSMUSG00000019943.11"/>
</dbReference>
<dbReference type="GeneID" id="67972"/>
<dbReference type="KEGG" id="mmu:67972"/>
<dbReference type="UCSC" id="uc007gxf.2">
    <property type="organism name" value="mouse"/>
</dbReference>
<dbReference type="AGR" id="MGI:104653"/>
<dbReference type="CTD" id="490"/>
<dbReference type="MGI" id="MGI:104653">
    <property type="gene designation" value="Atp2b1"/>
</dbReference>
<dbReference type="VEuPathDB" id="HostDB:ENSMUSG00000019943"/>
<dbReference type="eggNOG" id="KOG0204">
    <property type="taxonomic scope" value="Eukaryota"/>
</dbReference>
<dbReference type="GeneTree" id="ENSGT00940000158686"/>
<dbReference type="HOGENOM" id="CLU_002360_9_0_1"/>
<dbReference type="InParanoid" id="G5E829"/>
<dbReference type="OMA" id="YRMYVKG"/>
<dbReference type="OrthoDB" id="116380at2759"/>
<dbReference type="PhylomeDB" id="G5E829"/>
<dbReference type="TreeFam" id="TF300330"/>
<dbReference type="Reactome" id="R-MMU-418359">
    <property type="pathway name" value="Reduction of cytosolic Ca++ levels"/>
</dbReference>
<dbReference type="Reactome" id="R-MMU-5578775">
    <property type="pathway name" value="Ion homeostasis"/>
</dbReference>
<dbReference type="Reactome" id="R-MMU-936837">
    <property type="pathway name" value="Ion transport by P-type ATPases"/>
</dbReference>
<dbReference type="BioGRID-ORCS" id="67972">
    <property type="hits" value="21 hits in 77 CRISPR screens"/>
</dbReference>
<dbReference type="CD-CODE" id="CE726F99">
    <property type="entry name" value="Postsynaptic density"/>
</dbReference>
<dbReference type="ChiTaRS" id="Atp2b1">
    <property type="organism name" value="mouse"/>
</dbReference>
<dbReference type="PRO" id="PR:G5E829"/>
<dbReference type="Proteomes" id="UP000000589">
    <property type="component" value="Chromosome 10"/>
</dbReference>
<dbReference type="RNAct" id="G5E829">
    <property type="molecule type" value="protein"/>
</dbReference>
<dbReference type="Bgee" id="ENSMUSG00000019943">
    <property type="expression patterns" value="Expressed in otolith organ and 232 other cell types or tissues"/>
</dbReference>
<dbReference type="ExpressionAtlas" id="G5E829">
    <property type="expression patterns" value="baseline and differential"/>
</dbReference>
<dbReference type="GO" id="GO:0016323">
    <property type="term" value="C:basolateral plasma membrane"/>
    <property type="evidence" value="ECO:0000314"/>
    <property type="project" value="UniProtKB"/>
</dbReference>
<dbReference type="GO" id="GO:0042995">
    <property type="term" value="C:cell projection"/>
    <property type="evidence" value="ECO:0007669"/>
    <property type="project" value="UniProtKB-KW"/>
</dbReference>
<dbReference type="GO" id="GO:0098978">
    <property type="term" value="C:glutamatergic synapse"/>
    <property type="evidence" value="ECO:0000314"/>
    <property type="project" value="SynGO"/>
</dbReference>
<dbReference type="GO" id="GO:0001772">
    <property type="term" value="C:immunological synapse"/>
    <property type="evidence" value="ECO:0000314"/>
    <property type="project" value="UniProtKB"/>
</dbReference>
<dbReference type="GO" id="GO:0005654">
    <property type="term" value="C:nucleoplasm"/>
    <property type="evidence" value="ECO:0007669"/>
    <property type="project" value="Ensembl"/>
</dbReference>
<dbReference type="GO" id="GO:0098684">
    <property type="term" value="C:photoreceptor ribbon synapse"/>
    <property type="evidence" value="ECO:0000314"/>
    <property type="project" value="SynGO"/>
</dbReference>
<dbReference type="GO" id="GO:0005886">
    <property type="term" value="C:plasma membrane"/>
    <property type="evidence" value="ECO:0000304"/>
    <property type="project" value="MGI"/>
</dbReference>
<dbReference type="GO" id="GO:0042734">
    <property type="term" value="C:presynaptic membrane"/>
    <property type="evidence" value="ECO:0000314"/>
    <property type="project" value="UniProtKB"/>
</dbReference>
<dbReference type="GO" id="GO:0030672">
    <property type="term" value="C:synaptic vesicle membrane"/>
    <property type="evidence" value="ECO:0000314"/>
    <property type="project" value="UniProtKB"/>
</dbReference>
<dbReference type="GO" id="GO:0005524">
    <property type="term" value="F:ATP binding"/>
    <property type="evidence" value="ECO:0007669"/>
    <property type="project" value="UniProtKB-KW"/>
</dbReference>
<dbReference type="GO" id="GO:0016887">
    <property type="term" value="F:ATP hydrolysis activity"/>
    <property type="evidence" value="ECO:0000250"/>
    <property type="project" value="UniProtKB"/>
</dbReference>
<dbReference type="GO" id="GO:0005516">
    <property type="term" value="F:calmodulin binding"/>
    <property type="evidence" value="ECO:0007669"/>
    <property type="project" value="UniProtKB-KW"/>
</dbReference>
<dbReference type="GO" id="GO:0046872">
    <property type="term" value="F:metal ion binding"/>
    <property type="evidence" value="ECO:0007669"/>
    <property type="project" value="UniProtKB-KW"/>
</dbReference>
<dbReference type="GO" id="GO:0005388">
    <property type="term" value="F:P-type calcium transporter activity"/>
    <property type="evidence" value="ECO:0007669"/>
    <property type="project" value="UniProtKB-EC"/>
</dbReference>
<dbReference type="GO" id="GO:1990034">
    <property type="term" value="P:calcium ion export across plasma membrane"/>
    <property type="evidence" value="ECO:0007669"/>
    <property type="project" value="Ensembl"/>
</dbReference>
<dbReference type="GO" id="GO:0006816">
    <property type="term" value="P:calcium ion transport"/>
    <property type="evidence" value="ECO:0000304"/>
    <property type="project" value="MGI"/>
</dbReference>
<dbReference type="GO" id="GO:0006874">
    <property type="term" value="P:intracellular calcium ion homeostasis"/>
    <property type="evidence" value="ECO:0000315"/>
    <property type="project" value="UniProtKB"/>
</dbReference>
<dbReference type="GO" id="GO:0001818">
    <property type="term" value="P:negative regulation of cytokine production"/>
    <property type="evidence" value="ECO:0000315"/>
    <property type="project" value="UniProtKB"/>
</dbReference>
<dbReference type="GO" id="GO:0051481">
    <property type="term" value="P:negative regulation of cytosolic calcium ion concentration"/>
    <property type="evidence" value="ECO:0000315"/>
    <property type="project" value="UniProtKB"/>
</dbReference>
<dbReference type="GO" id="GO:0030501">
    <property type="term" value="P:positive regulation of bone mineralization"/>
    <property type="evidence" value="ECO:0000315"/>
    <property type="project" value="UniProtKB"/>
</dbReference>
<dbReference type="GO" id="GO:0051928">
    <property type="term" value="P:positive regulation of calcium ion transport"/>
    <property type="evidence" value="ECO:0000315"/>
    <property type="project" value="UniProtKB"/>
</dbReference>
<dbReference type="GO" id="GO:0008217">
    <property type="term" value="P:regulation of blood pressure"/>
    <property type="evidence" value="ECO:0000315"/>
    <property type="project" value="UniProtKB"/>
</dbReference>
<dbReference type="GO" id="GO:1900076">
    <property type="term" value="P:regulation of cellular response to insulin stimulus"/>
    <property type="evidence" value="ECO:0000250"/>
    <property type="project" value="UniProtKB"/>
</dbReference>
<dbReference type="GO" id="GO:0051480">
    <property type="term" value="P:regulation of cytosolic calcium ion concentration"/>
    <property type="evidence" value="ECO:0000315"/>
    <property type="project" value="UniProtKB"/>
</dbReference>
<dbReference type="GO" id="GO:0003056">
    <property type="term" value="P:regulation of vascular associated smooth muscle contraction"/>
    <property type="evidence" value="ECO:0000315"/>
    <property type="project" value="UniProtKB"/>
</dbReference>
<dbReference type="CDD" id="cd02081">
    <property type="entry name" value="P-type_ATPase_Ca_PMCA-like"/>
    <property type="match status" value="1"/>
</dbReference>
<dbReference type="FunFam" id="1.20.1110.10:FF:000001">
    <property type="entry name" value="Calcium-transporting ATPase"/>
    <property type="match status" value="1"/>
</dbReference>
<dbReference type="FunFam" id="1.20.1110.10:FF:000002">
    <property type="entry name" value="Calcium-transporting ATPase"/>
    <property type="match status" value="1"/>
</dbReference>
<dbReference type="FunFam" id="1.20.1110.10:FF:000008">
    <property type="entry name" value="Calcium-transporting ATPase"/>
    <property type="match status" value="1"/>
</dbReference>
<dbReference type="FunFam" id="2.70.150.10:FF:000001">
    <property type="entry name" value="Calcium-transporting ATPase"/>
    <property type="match status" value="1"/>
</dbReference>
<dbReference type="FunFam" id="3.40.1110.10:FF:000002">
    <property type="entry name" value="Calcium-transporting ATPase"/>
    <property type="match status" value="1"/>
</dbReference>
<dbReference type="FunFam" id="3.40.50.1000:FF:000007">
    <property type="entry name" value="Calcium-transporting ATPase"/>
    <property type="match status" value="1"/>
</dbReference>
<dbReference type="Gene3D" id="3.40.1110.10">
    <property type="entry name" value="Calcium-transporting ATPase, cytoplasmic domain N"/>
    <property type="match status" value="1"/>
</dbReference>
<dbReference type="Gene3D" id="2.70.150.10">
    <property type="entry name" value="Calcium-transporting ATPase, cytoplasmic transduction domain A"/>
    <property type="match status" value="1"/>
</dbReference>
<dbReference type="Gene3D" id="1.20.1110.10">
    <property type="entry name" value="Calcium-transporting ATPase, transmembrane domain"/>
    <property type="match status" value="3"/>
</dbReference>
<dbReference type="Gene3D" id="3.40.50.1000">
    <property type="entry name" value="HAD superfamily/HAD-like"/>
    <property type="match status" value="1"/>
</dbReference>
<dbReference type="InterPro" id="IPR022141">
    <property type="entry name" value="ATP_Ca_trans_C"/>
</dbReference>
<dbReference type="InterPro" id="IPR006068">
    <property type="entry name" value="ATPase_P-typ_cation-transptr_C"/>
</dbReference>
<dbReference type="InterPro" id="IPR004014">
    <property type="entry name" value="ATPase_P-typ_cation-transptr_N"/>
</dbReference>
<dbReference type="InterPro" id="IPR023299">
    <property type="entry name" value="ATPase_P-typ_cyto_dom_N"/>
</dbReference>
<dbReference type="InterPro" id="IPR018303">
    <property type="entry name" value="ATPase_P-typ_P_site"/>
</dbReference>
<dbReference type="InterPro" id="IPR023298">
    <property type="entry name" value="ATPase_P-typ_TM_dom_sf"/>
</dbReference>
<dbReference type="InterPro" id="IPR008250">
    <property type="entry name" value="ATPase_P-typ_transduc_dom_A_sf"/>
</dbReference>
<dbReference type="InterPro" id="IPR036412">
    <property type="entry name" value="HAD-like_sf"/>
</dbReference>
<dbReference type="InterPro" id="IPR023214">
    <property type="entry name" value="HAD_sf"/>
</dbReference>
<dbReference type="InterPro" id="IPR006408">
    <property type="entry name" value="P-type_ATPase_IIB"/>
</dbReference>
<dbReference type="InterPro" id="IPR001757">
    <property type="entry name" value="P_typ_ATPase"/>
</dbReference>
<dbReference type="InterPro" id="IPR044492">
    <property type="entry name" value="P_typ_ATPase_HD_dom"/>
</dbReference>
<dbReference type="NCBIfam" id="TIGR01517">
    <property type="entry name" value="ATPase-IIB_Ca"/>
    <property type="match status" value="1"/>
</dbReference>
<dbReference type="NCBIfam" id="TIGR01494">
    <property type="entry name" value="ATPase_P-type"/>
    <property type="match status" value="3"/>
</dbReference>
<dbReference type="PANTHER" id="PTHR24093">
    <property type="entry name" value="CATION TRANSPORTING ATPASE"/>
    <property type="match status" value="1"/>
</dbReference>
<dbReference type="PANTHER" id="PTHR24093:SF245">
    <property type="entry name" value="PLASMA MEMBRANE CALCIUM-TRANSPORTING ATPASE 1"/>
    <property type="match status" value="1"/>
</dbReference>
<dbReference type="Pfam" id="PF12424">
    <property type="entry name" value="ATP_Ca_trans_C"/>
    <property type="match status" value="1"/>
</dbReference>
<dbReference type="Pfam" id="PF13246">
    <property type="entry name" value="Cation_ATPase"/>
    <property type="match status" value="1"/>
</dbReference>
<dbReference type="Pfam" id="PF00689">
    <property type="entry name" value="Cation_ATPase_C"/>
    <property type="match status" value="1"/>
</dbReference>
<dbReference type="Pfam" id="PF00690">
    <property type="entry name" value="Cation_ATPase_N"/>
    <property type="match status" value="1"/>
</dbReference>
<dbReference type="Pfam" id="PF00122">
    <property type="entry name" value="E1-E2_ATPase"/>
    <property type="match status" value="2"/>
</dbReference>
<dbReference type="Pfam" id="PF00702">
    <property type="entry name" value="Hydrolase"/>
    <property type="match status" value="1"/>
</dbReference>
<dbReference type="PRINTS" id="PR00119">
    <property type="entry name" value="CATATPASE"/>
</dbReference>
<dbReference type="SFLD" id="SFLDG00002">
    <property type="entry name" value="C1.7:_P-type_atpase_like"/>
    <property type="match status" value="1"/>
</dbReference>
<dbReference type="SFLD" id="SFLDF00027">
    <property type="entry name" value="p-type_atpase"/>
    <property type="match status" value="1"/>
</dbReference>
<dbReference type="SMART" id="SM00831">
    <property type="entry name" value="Cation_ATPase_N"/>
    <property type="match status" value="1"/>
</dbReference>
<dbReference type="SUPFAM" id="SSF81653">
    <property type="entry name" value="Calcium ATPase, transduction domain A"/>
    <property type="match status" value="1"/>
</dbReference>
<dbReference type="SUPFAM" id="SSF81665">
    <property type="entry name" value="Calcium ATPase, transmembrane domain M"/>
    <property type="match status" value="1"/>
</dbReference>
<dbReference type="SUPFAM" id="SSF56784">
    <property type="entry name" value="HAD-like"/>
    <property type="match status" value="1"/>
</dbReference>
<dbReference type="SUPFAM" id="SSF81660">
    <property type="entry name" value="Metal cation-transporting ATPase, ATP-binding domain N"/>
    <property type="match status" value="1"/>
</dbReference>
<dbReference type="PROSITE" id="PS00154">
    <property type="entry name" value="ATPASE_E1_E2"/>
    <property type="match status" value="1"/>
</dbReference>
<organism>
    <name type="scientific">Mus musculus</name>
    <name type="common">Mouse</name>
    <dbReference type="NCBI Taxonomy" id="10090"/>
    <lineage>
        <taxon>Eukaryota</taxon>
        <taxon>Metazoa</taxon>
        <taxon>Chordata</taxon>
        <taxon>Craniata</taxon>
        <taxon>Vertebrata</taxon>
        <taxon>Euteleostomi</taxon>
        <taxon>Mammalia</taxon>
        <taxon>Eutheria</taxon>
        <taxon>Euarchontoglires</taxon>
        <taxon>Glires</taxon>
        <taxon>Rodentia</taxon>
        <taxon>Myomorpha</taxon>
        <taxon>Muroidea</taxon>
        <taxon>Muridae</taxon>
        <taxon>Murinae</taxon>
        <taxon>Mus</taxon>
        <taxon>Mus</taxon>
    </lineage>
</organism>
<name>AT2B1_MOUSE</name>
<reference key="1">
    <citation type="journal article" date="2009" name="PLoS Biol.">
        <title>Lineage-specific biology revealed by a finished genome assembly of the mouse.</title>
        <authorList>
            <person name="Church D.M."/>
            <person name="Goodstadt L."/>
            <person name="Hillier L.W."/>
            <person name="Zody M.C."/>
            <person name="Goldstein S."/>
            <person name="She X."/>
            <person name="Bult C.J."/>
            <person name="Agarwala R."/>
            <person name="Cherry J.L."/>
            <person name="DiCuccio M."/>
            <person name="Hlavina W."/>
            <person name="Kapustin Y."/>
            <person name="Meric P."/>
            <person name="Maglott D."/>
            <person name="Birtle Z."/>
            <person name="Marques A.C."/>
            <person name="Graves T."/>
            <person name="Zhou S."/>
            <person name="Teague B."/>
            <person name="Potamousis K."/>
            <person name="Churas C."/>
            <person name="Place M."/>
            <person name="Herschleb J."/>
            <person name="Runnheim R."/>
            <person name="Forrest D."/>
            <person name="Amos-Landgraf J."/>
            <person name="Schwartz D.C."/>
            <person name="Cheng Z."/>
            <person name="Lindblad-Toh K."/>
            <person name="Eichler E.E."/>
            <person name="Ponting C.P."/>
        </authorList>
    </citation>
    <scope>NUCLEOTIDE SEQUENCE [LARGE SCALE GENOMIC DNA]</scope>
    <source>
        <strain>C57BL/6J</strain>
    </source>
</reference>
<reference evidence="22" key="2">
    <citation type="submission" date="2005-07" db="EMBL/GenBank/DDBJ databases">
        <authorList>
            <person name="Mural R.J."/>
            <person name="Adams M.D."/>
            <person name="Myers E.W."/>
            <person name="Smith H.O."/>
            <person name="Venter J.C."/>
        </authorList>
    </citation>
    <scope>NUCLEOTIDE SEQUENCE [LARGE SCALE GENOMIC DNA]</scope>
</reference>
<reference evidence="19" key="3">
    <citation type="journal article" date="2002" name="J. Comp. Neurol.">
        <title>Cell-specific expression of plasma membrane calcium ATPase isoforms in retinal neurons.</title>
        <authorList>
            <person name="Krizaj D."/>
            <person name="Demarco S.J."/>
            <person name="Johnson J."/>
            <person name="Strehler E.E."/>
            <person name="Copenhagen D.R."/>
        </authorList>
    </citation>
    <scope>SUBCELLULAR LOCATION</scope>
    <scope>TISSUE SPECIFICITY</scope>
</reference>
<reference evidence="19" key="4">
    <citation type="journal article" date="2004" name="J. Biol. Chem.">
        <title>Targeted ablation of plasma membrane Ca2+-ATPase (PMCA) 1 and 4 indicates a major housekeeping function for PMCA1 and a critical role in hyperactivated sperm motility and male fertility for PMCA4.</title>
        <authorList>
            <person name="Okunade G.W."/>
            <person name="Miller M.L."/>
            <person name="Pyne G.J."/>
            <person name="Sutliff R.L."/>
            <person name="O'Connor K.T."/>
            <person name="Neumann J.C."/>
            <person name="Andringa A."/>
            <person name="Miller D.A."/>
            <person name="Prasad V."/>
            <person name="Doetschman T."/>
            <person name="Paul R.J."/>
            <person name="Shull G.E."/>
        </authorList>
    </citation>
    <scope>TISSUE SPECIFICITY</scope>
    <scope>DISRUPTION PHENOTYPE</scope>
</reference>
<reference key="5">
    <citation type="journal article" date="2007" name="Am. J. Physiol.">
        <title>Distinct roles of PMCA isoforms in Ca2+ homeostasis of bladder smooth muscle: evidence from PMCA gene-ablated mice.</title>
        <authorList>
            <person name="Liu L."/>
            <person name="Ishida Y."/>
            <person name="Okunade G."/>
            <person name="Pyne-Geithman G.J."/>
            <person name="Shull G.E."/>
            <person name="Paul R.J."/>
        </authorList>
    </citation>
    <scope>FUNCTION</scope>
</reference>
<reference key="6">
    <citation type="journal article" date="2007" name="Proc. Natl. Acad. Sci. U.S.A.">
        <title>Large-scale phosphorylation analysis of mouse liver.</title>
        <authorList>
            <person name="Villen J."/>
            <person name="Beausoleil S.A."/>
            <person name="Gerber S.A."/>
            <person name="Gygi S.P."/>
        </authorList>
    </citation>
    <scope>PHOSPHORYLATION [LARGE SCALE ANALYSIS] AT SER-1155 AND THR-1165</scope>
    <scope>IDENTIFICATION BY MASS SPECTROMETRY [LARGE SCALE ANALYSIS]</scope>
    <source>
        <tissue>Liver</tissue>
    </source>
</reference>
<reference key="7">
    <citation type="journal article" date="2008" name="J. Proteome Res.">
        <title>Specific phosphopeptide enrichment with immobilized titanium ion affinity chromatography adsorbent for phosphoproteome analysis.</title>
        <authorList>
            <person name="Zhou H."/>
            <person name="Ye M."/>
            <person name="Dong J."/>
            <person name="Han G."/>
            <person name="Jiang X."/>
            <person name="Wu R."/>
            <person name="Zou H."/>
        </authorList>
    </citation>
    <scope>PHOSPHORYLATION [LARGE SCALE ANALYSIS] AT SER-1155</scope>
    <scope>IDENTIFICATION BY MASS SPECTROMETRY [LARGE SCALE ANALYSIS]</scope>
    <source>
        <tissue>Liver</tissue>
    </source>
</reference>
<reference key="8">
    <citation type="journal article" date="2009" name="Immunity">
        <title>The phagosomal proteome in interferon-gamma-activated macrophages.</title>
        <authorList>
            <person name="Trost M."/>
            <person name="English L."/>
            <person name="Lemieux S."/>
            <person name="Courcelles M."/>
            <person name="Desjardins M."/>
            <person name="Thibault P."/>
        </authorList>
    </citation>
    <scope>PHOSPHORYLATION [LARGE SCALE ANALYSIS] AT SER-17; SER-338; SER-1155; THR-1165; SER-1178 AND SER-1182</scope>
    <scope>IDENTIFICATION BY MASS SPECTROMETRY [LARGE SCALE ANALYSIS]</scope>
</reference>
<reference key="9">
    <citation type="journal article" date="2009" name="Mol. Cell. Proteomics">
        <title>Large scale localization of protein phosphorylation by use of electron capture dissociation mass spectrometry.</title>
        <authorList>
            <person name="Sweet S.M."/>
            <person name="Bailey C.M."/>
            <person name="Cunningham D.L."/>
            <person name="Heath J.K."/>
            <person name="Cooper H.J."/>
        </authorList>
    </citation>
    <scope>PHOSPHORYLATION [LARGE SCALE ANALYSIS] AT SER-1155</scope>
    <scope>IDENTIFICATION BY MASS SPECTROMETRY [LARGE SCALE ANALYSIS]</scope>
    <source>
        <tissue>Embryonic fibroblast</tissue>
    </source>
</reference>
<reference key="10">
    <citation type="journal article" date="2010" name="Cell">
        <title>A tissue-specific atlas of mouse protein phosphorylation and expression.</title>
        <authorList>
            <person name="Huttlin E.L."/>
            <person name="Jedrychowski M.P."/>
            <person name="Elias J.E."/>
            <person name="Goswami T."/>
            <person name="Rad R."/>
            <person name="Beausoleil S.A."/>
            <person name="Villen J."/>
            <person name="Haas W."/>
            <person name="Sowa M.E."/>
            <person name="Gygi S.P."/>
        </authorList>
    </citation>
    <scope>PHOSPHORYLATION [LARGE SCALE ANALYSIS] AT SER-17; SER-338; SER-1155; THR-1165 AND SER-1182</scope>
    <scope>IDENTIFICATION BY MASS SPECTROMETRY [LARGE SCALE ANALYSIS]</scope>
    <source>
        <tissue>Brain</tissue>
        <tissue>Brown adipose tissue</tissue>
        <tissue>Heart</tissue>
        <tissue>Kidney</tissue>
        <tissue>Liver</tissue>
        <tissue>Lung</tissue>
        <tissue>Pancreas</tissue>
        <tissue>Spleen</tissue>
        <tissue>Testis</tissue>
    </source>
</reference>
<reference key="11">
    <citation type="journal article" date="2012" name="Hypertension">
        <title>Mice lacking hypertension candidate gene ATP2B1 in vascular smooth muscle cells show significant blood pressure elevation.</title>
        <authorList>
            <person name="Kobayashi Y."/>
            <person name="Hirawa N."/>
            <person name="Tabara Y."/>
            <person name="Muraoka H."/>
            <person name="Fujita M."/>
            <person name="Miyazaki N."/>
            <person name="Fujiwara A."/>
            <person name="Ichikawa Y."/>
            <person name="Yamamoto Y."/>
            <person name="Ichihara N."/>
            <person name="Saka S."/>
            <person name="Wakui H."/>
            <person name="Yoshida S."/>
            <person name="Yatsu K."/>
            <person name="Toya Y."/>
            <person name="Yasuda G."/>
            <person name="Kohara K."/>
            <person name="Kita Y."/>
            <person name="Takei K."/>
            <person name="Goshima Y."/>
            <person name="Ishikawa Y."/>
            <person name="Ueshima H."/>
            <person name="Miki T."/>
            <person name="Umemura S."/>
        </authorList>
    </citation>
    <scope>DISRUPTION PHENOTYPE</scope>
    <scope>FUNCTION</scope>
</reference>
<reference evidence="19" key="12">
    <citation type="journal article" date="2012" name="J. Cell Biol.">
        <title>Plasma membrane calcium ATPase regulates bone mass by fine-tuning osteoclast differentiation and survival.</title>
        <authorList>
            <person name="Kim H.J."/>
            <person name="Prasad V."/>
            <person name="Hyung S.W."/>
            <person name="Lee Z.H."/>
            <person name="Lee S.W."/>
            <person name="Bhargava A."/>
            <person name="Pearce D."/>
            <person name="Lee Y."/>
            <person name="Kim H.H."/>
        </authorList>
    </citation>
    <scope>IDENTIFICATION BY MASS SPECTROMETRY</scope>
    <scope>FUNCTION</scope>
    <scope>TISSUE SPECIFICITY</scope>
    <scope>DEVELOPMENTAL STAGE</scope>
</reference>
<reference key="13">
    <citation type="journal article" date="2013" name="J. Biol. Chem.">
        <title>Impaired intestinal calcium absorption in protein 4.1R-deficient mice due to altered expression of plasma membrane calcium ATPase 1b (PMCA1b).</title>
        <authorList>
            <person name="Liu C."/>
            <person name="Weng H."/>
            <person name="Chen L."/>
            <person name="Yang S."/>
            <person name="Wang H."/>
            <person name="Debnath G."/>
            <person name="Guo X."/>
            <person name="Wu L."/>
            <person name="Mohandas N."/>
            <person name="An X."/>
        </authorList>
    </citation>
    <scope>TISSUE SPECIFICITY</scope>
    <scope>INTERACTION WITH EPB41</scope>
    <scope>SUBCELLULAR LOCATION</scope>
</reference>
<reference key="14">
    <citation type="journal article" date="2014" name="J. Hypertens.">
        <title>Impaired nitric oxide production and increased blood pressure in systemic heterozygous ATP2B1 null mice.</title>
        <authorList>
            <person name="Fujiwara A."/>
            <person name="Hirawa N."/>
            <person name="Fujita M."/>
            <person name="Kobayashi Y."/>
            <person name="Okuyama Y."/>
            <person name="Yatsu K."/>
            <person name="Katsumata M."/>
            <person name="Yamamoto Y."/>
            <person name="Ichihara N."/>
            <person name="Saka S."/>
            <person name="Toya Y."/>
            <person name="Yasuda G."/>
            <person name="Goshima Y."/>
            <person name="Tabara Y."/>
            <person name="Miki T."/>
            <person name="Ueshima H."/>
            <person name="Ishikawa Y."/>
            <person name="Umemura S."/>
        </authorList>
    </citation>
    <scope>FUNCTION</scope>
    <scope>CATALYTIC ACTIVITY</scope>
</reference>
<reference key="15">
    <citation type="journal article" date="2015" name="Biochem. Biophys. Res. Commun.">
        <title>Deletion of the intestinal plasma membrane calcium pump, isoform 1, Atp2b1, in mice is associated with decreased bone mineral density and impaired responsiveness to 1, 25-dihydroxyvitamin D3.</title>
        <authorList>
            <person name="Ryan Z.C."/>
            <person name="Craig T.A."/>
            <person name="Filoteo A.G."/>
            <person name="Westendorf J.J."/>
            <person name="Cartwright E.J."/>
            <person name="Neyses L."/>
            <person name="Strehler E.E."/>
            <person name="Kumar R."/>
        </authorList>
    </citation>
    <scope>DISRUPTION PHENOTYPE</scope>
    <scope>FUNCTION</scope>
</reference>
<reference key="16">
    <citation type="journal article" date="2017" name="Sci. Rep.">
        <title>A complex of Neuroplastin and Plasma Membrane Ca2+ ATPase controls T cell activation.</title>
        <authorList>
            <person name="Korthals M."/>
            <person name="Langnaese K."/>
            <person name="Smalla K.H."/>
            <person name="Kaehne T."/>
            <person name="Herrera-Molina R."/>
            <person name="Handschuh J."/>
            <person name="Lehmann A.C."/>
            <person name="Mamula D."/>
            <person name="Naumann M."/>
            <person name="Seidenbecher C."/>
            <person name="Zuschratter W."/>
            <person name="Tedford K."/>
            <person name="Gundelfinger E.D."/>
            <person name="Montag D."/>
            <person name="Fischer K.D."/>
            <person name="Thomas U."/>
        </authorList>
    </citation>
    <scope>INTERACTION WITH NPTN</scope>
    <scope>INDUCTION</scope>
    <scope>SUBCELLULAR LOCATION</scope>
    <scope>FUNCTION</scope>
</reference>
<reference key="17">
    <citation type="journal article" date="2018" name="Hypertens. Res.">
        <title>Reduced secretion of parathyroid hormone and hypocalcemia in systemic heterozygous ATP2B1-null hypertensive mice.</title>
        <authorList>
            <person name="Ehara Y."/>
            <person name="Hirawa N."/>
            <person name="Sumida K."/>
            <person name="Fujiwara A."/>
            <person name="Kagimoto M."/>
            <person name="Ooki-Okuyama Y."/>
            <person name="Fujita M."/>
            <person name="Katsumata M."/>
            <person name="Kobayashi Y."/>
            <person name="Saka S."/>
            <person name="Katou I."/>
            <person name="Yatsu K."/>
            <person name="Umemura S."/>
            <person name="Tamura K."/>
        </authorList>
    </citation>
    <scope>DISRUPTION PHENOTYPE</scope>
    <scope>FUNCTION</scope>
</reference>
<reference key="18">
    <citation type="journal article" date="2019" name="Sci. Rep.">
        <title>Expression of plasma membrane calcium ATPases confers Ca2+/H+ exchange in rodent synaptic vesicles.</title>
        <authorList>
            <person name="Ono Y."/>
            <person name="Mori Y."/>
            <person name="Egashira Y."/>
            <person name="Sumiyama K."/>
            <person name="Takamori S."/>
        </authorList>
    </citation>
    <scope>FUNCTION</scope>
    <scope>CATALYTIC ACTIVITY</scope>
    <scope>SUBCELLULAR LOCATION</scope>
</reference>
<proteinExistence type="evidence at protein level"/>
<accession>G5E829</accession>
<protein>
    <recommendedName>
        <fullName evidence="19">Plasma membrane calcium-transporting ATPase 1</fullName>
        <ecNumber evidence="20">7.2.2.10</ecNumber>
    </recommendedName>
    <alternativeName>
        <fullName evidence="18">Plasma membrane calcium ATPase isoform 1</fullName>
        <shortName evidence="18">PMCA1</shortName>
    </alternativeName>
    <alternativeName>
        <fullName evidence="19">Plasma membrane calcium pump isoform 1</fullName>
    </alternativeName>
</protein>